<gene>
    <name evidence="1" type="primary">TIF32</name>
    <name type="ordered locus">YALI0F18942g</name>
</gene>
<comment type="function">
    <text evidence="1">RNA-binding component of the eukaryotic translation initiation factor 3 (eIF-3) complex, which is involved in protein synthesis of a specialized repertoire of mRNAs and, together with other initiation factors, stimulates binding of mRNA and methionyl-tRNAi to the 40S ribosome. The eIF-3 complex specifically targets and initiates translation of a subset of mRNAs involved in cell proliferation.</text>
</comment>
<comment type="subunit">
    <text evidence="1">Component of the eukaryotic translation initiation factor 3 (eIF-3) complex.</text>
</comment>
<comment type="subcellular location">
    <subcellularLocation>
        <location evidence="1">Cytoplasm</location>
    </subcellularLocation>
</comment>
<comment type="similarity">
    <text evidence="1">Belongs to the eIF-3 subunit A family.</text>
</comment>
<protein>
    <recommendedName>
        <fullName evidence="1">Eukaryotic translation initiation factor 3 subunit A</fullName>
        <shortName evidence="1">eIF3a</shortName>
    </recommendedName>
    <alternativeName>
        <fullName evidence="1">Eukaryotic translation initiation factor 3 110 kDa subunit homolog</fullName>
        <shortName evidence="1">eIF3 p110</shortName>
    </alternativeName>
    <alternativeName>
        <fullName evidence="1">Translation initiation factor eIF3, p110 subunit homolog</fullName>
    </alternativeName>
</protein>
<evidence type="ECO:0000255" key="1">
    <source>
        <dbReference type="HAMAP-Rule" id="MF_03000"/>
    </source>
</evidence>
<evidence type="ECO:0000255" key="2">
    <source>
        <dbReference type="PROSITE-ProRule" id="PRU01185"/>
    </source>
</evidence>
<evidence type="ECO:0000256" key="3">
    <source>
        <dbReference type="SAM" id="MobiDB-lite"/>
    </source>
</evidence>
<proteinExistence type="inferred from homology"/>
<name>EIF3A_YARLI</name>
<reference key="1">
    <citation type="journal article" date="2004" name="Nature">
        <title>Genome evolution in yeasts.</title>
        <authorList>
            <person name="Dujon B."/>
            <person name="Sherman D."/>
            <person name="Fischer G."/>
            <person name="Durrens P."/>
            <person name="Casaregola S."/>
            <person name="Lafontaine I."/>
            <person name="de Montigny J."/>
            <person name="Marck C."/>
            <person name="Neuveglise C."/>
            <person name="Talla E."/>
            <person name="Goffard N."/>
            <person name="Frangeul L."/>
            <person name="Aigle M."/>
            <person name="Anthouard V."/>
            <person name="Babour A."/>
            <person name="Barbe V."/>
            <person name="Barnay S."/>
            <person name="Blanchin S."/>
            <person name="Beckerich J.-M."/>
            <person name="Beyne E."/>
            <person name="Bleykasten C."/>
            <person name="Boisrame A."/>
            <person name="Boyer J."/>
            <person name="Cattolico L."/>
            <person name="Confanioleri F."/>
            <person name="de Daruvar A."/>
            <person name="Despons L."/>
            <person name="Fabre E."/>
            <person name="Fairhead C."/>
            <person name="Ferry-Dumazet H."/>
            <person name="Groppi A."/>
            <person name="Hantraye F."/>
            <person name="Hennequin C."/>
            <person name="Jauniaux N."/>
            <person name="Joyet P."/>
            <person name="Kachouri R."/>
            <person name="Kerrest A."/>
            <person name="Koszul R."/>
            <person name="Lemaire M."/>
            <person name="Lesur I."/>
            <person name="Ma L."/>
            <person name="Muller H."/>
            <person name="Nicaud J.-M."/>
            <person name="Nikolski M."/>
            <person name="Oztas S."/>
            <person name="Ozier-Kalogeropoulos O."/>
            <person name="Pellenz S."/>
            <person name="Potier S."/>
            <person name="Richard G.-F."/>
            <person name="Straub M.-L."/>
            <person name="Suleau A."/>
            <person name="Swennen D."/>
            <person name="Tekaia F."/>
            <person name="Wesolowski-Louvel M."/>
            <person name="Westhof E."/>
            <person name="Wirth B."/>
            <person name="Zeniou-Meyer M."/>
            <person name="Zivanovic Y."/>
            <person name="Bolotin-Fukuhara M."/>
            <person name="Thierry A."/>
            <person name="Bouchier C."/>
            <person name="Caudron B."/>
            <person name="Scarpelli C."/>
            <person name="Gaillardin C."/>
            <person name="Weissenbach J."/>
            <person name="Wincker P."/>
            <person name="Souciet J.-L."/>
        </authorList>
    </citation>
    <scope>NUCLEOTIDE SEQUENCE [LARGE SCALE GENOMIC DNA]</scope>
    <source>
        <strain>CLIB 122 / E 150</strain>
    </source>
</reference>
<dbReference type="EMBL" id="CR382132">
    <property type="protein sequence ID" value="CAG78410.1"/>
    <property type="molecule type" value="Genomic_DNA"/>
</dbReference>
<dbReference type="RefSeq" id="XP_505601.1">
    <property type="nucleotide sequence ID" value="XM_505601.1"/>
</dbReference>
<dbReference type="SMR" id="Q6C161"/>
<dbReference type="FunCoup" id="Q6C161">
    <property type="interactions" value="1338"/>
</dbReference>
<dbReference type="STRING" id="284591.Q6C161"/>
<dbReference type="EnsemblFungi" id="CAG78410">
    <property type="protein sequence ID" value="CAG78410"/>
    <property type="gene ID" value="YALI0_F18942g"/>
</dbReference>
<dbReference type="KEGG" id="yli:2909029"/>
<dbReference type="VEuPathDB" id="FungiDB:YALI0_F18942g"/>
<dbReference type="HOGENOM" id="CLU_002096_2_1_1"/>
<dbReference type="InParanoid" id="Q6C161"/>
<dbReference type="OMA" id="EHITNKR"/>
<dbReference type="OrthoDB" id="94207at4891"/>
<dbReference type="Proteomes" id="UP000001300">
    <property type="component" value="Chromosome F"/>
</dbReference>
<dbReference type="GO" id="GO:0010494">
    <property type="term" value="C:cytoplasmic stress granule"/>
    <property type="evidence" value="ECO:0007669"/>
    <property type="project" value="EnsemblFungi"/>
</dbReference>
<dbReference type="GO" id="GO:0016282">
    <property type="term" value="C:eukaryotic 43S preinitiation complex"/>
    <property type="evidence" value="ECO:0007669"/>
    <property type="project" value="UniProtKB-UniRule"/>
</dbReference>
<dbReference type="GO" id="GO:0033290">
    <property type="term" value="C:eukaryotic 48S preinitiation complex"/>
    <property type="evidence" value="ECO:0007669"/>
    <property type="project" value="UniProtKB-UniRule"/>
</dbReference>
<dbReference type="GO" id="GO:0071540">
    <property type="term" value="C:eukaryotic translation initiation factor 3 complex, eIF3e"/>
    <property type="evidence" value="ECO:0000318"/>
    <property type="project" value="GO_Central"/>
</dbReference>
<dbReference type="GO" id="GO:0071541">
    <property type="term" value="C:eukaryotic translation initiation factor 3 complex, eIF3m"/>
    <property type="evidence" value="ECO:0000318"/>
    <property type="project" value="GO_Central"/>
</dbReference>
<dbReference type="GO" id="GO:0043614">
    <property type="term" value="C:multi-eIF complex"/>
    <property type="evidence" value="ECO:0000318"/>
    <property type="project" value="GO_Central"/>
</dbReference>
<dbReference type="GO" id="GO:0003729">
    <property type="term" value="F:mRNA binding"/>
    <property type="evidence" value="ECO:0000318"/>
    <property type="project" value="GO_Central"/>
</dbReference>
<dbReference type="GO" id="GO:0003743">
    <property type="term" value="F:translation initiation factor activity"/>
    <property type="evidence" value="ECO:0007669"/>
    <property type="project" value="UniProtKB-UniRule"/>
</dbReference>
<dbReference type="GO" id="GO:0001732">
    <property type="term" value="P:formation of cytoplasmic translation initiation complex"/>
    <property type="evidence" value="ECO:0000318"/>
    <property type="project" value="GO_Central"/>
</dbReference>
<dbReference type="GO" id="GO:0002188">
    <property type="term" value="P:translation reinitiation"/>
    <property type="evidence" value="ECO:0000318"/>
    <property type="project" value="GO_Central"/>
</dbReference>
<dbReference type="FunFam" id="1.25.40.860:FF:000003">
    <property type="entry name" value="Eukaryotic translation initiation factor 3 subunit A"/>
    <property type="match status" value="1"/>
</dbReference>
<dbReference type="FunFam" id="4.10.860.10:FF:000001">
    <property type="entry name" value="Eukaryotic translation initiation factor 3 subunit A"/>
    <property type="match status" value="1"/>
</dbReference>
<dbReference type="Gene3D" id="1.25.40.860">
    <property type="match status" value="2"/>
</dbReference>
<dbReference type="Gene3D" id="4.10.860.10">
    <property type="entry name" value="UVR domain"/>
    <property type="match status" value="1"/>
</dbReference>
<dbReference type="HAMAP" id="MF_03000">
    <property type="entry name" value="eIF3a"/>
    <property type="match status" value="1"/>
</dbReference>
<dbReference type="InterPro" id="IPR027512">
    <property type="entry name" value="EIF3A"/>
</dbReference>
<dbReference type="InterPro" id="IPR054711">
    <property type="entry name" value="eIF3a_PCI_TPR-like"/>
</dbReference>
<dbReference type="InterPro" id="IPR000717">
    <property type="entry name" value="PCI_dom"/>
</dbReference>
<dbReference type="PANTHER" id="PTHR14005:SF0">
    <property type="entry name" value="EUKARYOTIC TRANSLATION INITIATION FACTOR 3 SUBUNIT A"/>
    <property type="match status" value="1"/>
</dbReference>
<dbReference type="PANTHER" id="PTHR14005">
    <property type="entry name" value="EUKARYOTIC TRANSLATION INITIATION FACTOR 3, THETA SUBUNIT"/>
    <property type="match status" value="1"/>
</dbReference>
<dbReference type="Pfam" id="PF22591">
    <property type="entry name" value="eIF3a_PCI_TPR-like"/>
    <property type="match status" value="1"/>
</dbReference>
<dbReference type="Pfam" id="PF01399">
    <property type="entry name" value="PCI"/>
    <property type="match status" value="1"/>
</dbReference>
<dbReference type="SMART" id="SM00088">
    <property type="entry name" value="PINT"/>
    <property type="match status" value="1"/>
</dbReference>
<dbReference type="PROSITE" id="PS50250">
    <property type="entry name" value="PCI"/>
    <property type="match status" value="1"/>
</dbReference>
<organism>
    <name type="scientific">Yarrowia lipolytica (strain CLIB 122 / E 150)</name>
    <name type="common">Yeast</name>
    <name type="synonym">Candida lipolytica</name>
    <dbReference type="NCBI Taxonomy" id="284591"/>
    <lineage>
        <taxon>Eukaryota</taxon>
        <taxon>Fungi</taxon>
        <taxon>Dikarya</taxon>
        <taxon>Ascomycota</taxon>
        <taxon>Saccharomycotina</taxon>
        <taxon>Dipodascomycetes</taxon>
        <taxon>Dipodascales</taxon>
        <taxon>Dipodascales incertae sedis</taxon>
        <taxon>Yarrowia</taxon>
    </lineage>
</organism>
<accession>Q6C161</accession>
<keyword id="KW-0175">Coiled coil</keyword>
<keyword id="KW-0963">Cytoplasm</keyword>
<keyword id="KW-0396">Initiation factor</keyword>
<keyword id="KW-0648">Protein biosynthesis</keyword>
<keyword id="KW-1185">Reference proteome</keyword>
<keyword id="KW-0694">RNA-binding</keyword>
<sequence>MAPHQNVRPETVLKRTDELIAVGQQDAALELLHETVSARKARTTSVATLEPIVARFVQLSVDLRKGKIIKDGLHQYKKIVQSTNVNAIEPVIKQFLSLAEQRVTDAQAQADKIADEEEADDLEAEETPEDLLLATVSSEDTKDRTDRRVVTPWLKFLWEAYRSVLDVLRNNSKLEVIYQQVVEQAFNFCLKFSRKTEFRRLCELLRSHLQTTAQKGPNAPPVTATSVDLSDADTLQRYLDTRFSQLNVAVKLELWQEAFRSVEDVHTLLTVSKRPAKPLMMGNYYENLARIFLVAGNYLFHAAAWNKLFHLLSQSPRGAIPVSEYQRVASFVLLSALAIPHNSSAEDRYRNTRLTGLLNLQRTPTRDALLKSALSRNILAHVKPEIKALYKTLEVDFHPLSIRAKLTPVVGAIAEAPEFKPYFAPLYQVILTRLFQQLSQVYESVKLDFVIQLATFPAPFSATPLEIEQFIVRACAQGELAIKIDHDQRSVLFEEVRAATGSASLQDTPIEIVRTQLSRLGRTLSVADPLNSAEAREQQYVAALTTAQDNAEREHAETLARRAEIEARKAQAEAERAQREEEEARKRAQRLLDEELAEKERLAAEQHARELERIRKEQDAIREEEKKKLAEEINAKGIITIDLDKLEGLDTNALRKMQVDQLAKETKELGDRLRVTARRIDHTERAYRMEEIKLVEDDFVKQKQRDREIYDTRIKLIKDTAKAEHDAKVELAKRLQRAVPFYKSFRDDIRVKREAEFTRLREEAVKNLAEAKAARIEEVKAKRIADAKRAEEEAKAAAEAEAKAAAEAEAKAKAEQEMREKLLAEKKAREEANARADAAYEKQRQKEAELEAKLEAKRAGFSGAGRQAPPSGGYVPPSRREGGYVPPSRRGDAGAAPGAGSGGYTPPSRREGGGGGYVPPSRREGGGGGYVPPSRREGGSGAGSGGRYIPPSQRN</sequence>
<feature type="chain" id="PRO_0000366371" description="Eukaryotic translation initiation factor 3 subunit A">
    <location>
        <begin position="1"/>
        <end position="955"/>
    </location>
</feature>
<feature type="domain" description="PCI" evidence="2">
    <location>
        <begin position="325"/>
        <end position="498"/>
    </location>
</feature>
<feature type="region of interest" description="Disordered" evidence="3">
    <location>
        <begin position="789"/>
        <end position="955"/>
    </location>
</feature>
<feature type="coiled-coil region" evidence="1">
    <location>
        <begin position="96"/>
        <end position="127"/>
    </location>
</feature>
<feature type="coiled-coil region" evidence="1">
    <location>
        <begin position="533"/>
        <end position="636"/>
    </location>
</feature>
<feature type="coiled-coil region" evidence="1">
    <location>
        <begin position="752"/>
        <end position="860"/>
    </location>
</feature>
<feature type="compositionally biased region" description="Basic and acidic residues" evidence="3">
    <location>
        <begin position="789"/>
        <end position="858"/>
    </location>
</feature>